<accession>A6QLU1</accession>
<sequence length="727" mass="80763">MAFQKAVKGTILVGGGALATVLGLSHFAHYKRKQVNLAFVEAADCISEPVNREPPSREAQILTLKNTSEFDVLVIGGGATGSGCALDAVTRGLKTALVERDDFSSGTSSRSTKLIHGGVRYLQKAIMKLDIEQYRMVKEALHERANLLEIAPHLSAPLPIMLPIYKWWQLPYYWVGIKLYDLVAGSNCLKSSYVLSKSRALEHFPMLQKDKLVGAIVYYDGQHNDARMNLAIALTAARYGAATANYMEVMSLLKKTDPQTGKERVSGARCKDVLTGEEFDVRAKCVINATGPFTDTVRKMDDKDTTAICQPSAGVHIVMPGYYSPESMGLLDPATSDGRVIFFLPWQKMTIAGTTDTPTDVTHHPIPSEEDINFILNEVRNYLSCDVEVRRGDVLAAWSGIRPLVTDPKSADTKSISRNHVVDISESGLITIAGGKWTTYRSMAEDTINAAVKAHNLKAGPSRTVGLFLQGGKDWSPTLYIRLVQDYGLESEVAQHLAATYGDKAFEVAKMASVTGKRWPIVGVRLVSEFPYIEAEVKYGIKEYACTAVDMISRRTRLAFLNVQAAEEALPRIVELMGRELNWDDSKKEEELETARKFLYYEMGYKSRSEQLTDRSEISLLPSDIDRYKKRFHKFDADQKGFITIVDVQRVLESIGVQMDENTLHEILNEVDLNKNGQVELNEFLQLMSAIQKGRVSGSRLAILMKTAEENLDRRVPIPVDRSCGGL</sequence>
<feature type="transit peptide" description="Mitochondrion" evidence="1">
    <location>
        <begin position="1"/>
        <end position="42"/>
    </location>
</feature>
<feature type="chain" id="PRO_0000355966" description="Glycerol-3-phosphate dehydrogenase, mitochondrial">
    <location>
        <begin position="43"/>
        <end position="727"/>
    </location>
</feature>
<feature type="domain" description="EF-hand 1" evidence="5">
    <location>
        <begin position="623"/>
        <end position="658"/>
    </location>
</feature>
<feature type="domain" description="EF-hand 2" evidence="5">
    <location>
        <begin position="659"/>
        <end position="694"/>
    </location>
</feature>
<feature type="binding site" evidence="4">
    <location>
        <begin position="71"/>
        <end position="99"/>
    </location>
    <ligand>
        <name>FAD</name>
        <dbReference type="ChEBI" id="CHEBI:57692"/>
    </ligand>
</feature>
<feature type="binding site" evidence="5">
    <location>
        <position position="672"/>
    </location>
    <ligand>
        <name>Ca(2+)</name>
        <dbReference type="ChEBI" id="CHEBI:29108"/>
    </ligand>
</feature>
<feature type="binding site" evidence="5">
    <location>
        <position position="674"/>
    </location>
    <ligand>
        <name>Ca(2+)</name>
        <dbReference type="ChEBI" id="CHEBI:29108"/>
    </ligand>
</feature>
<feature type="binding site" evidence="5">
    <location>
        <position position="676"/>
    </location>
    <ligand>
        <name>Ca(2+)</name>
        <dbReference type="ChEBI" id="CHEBI:29108"/>
    </ligand>
</feature>
<feature type="binding site" evidence="5">
    <location>
        <position position="678"/>
    </location>
    <ligand>
        <name>Ca(2+)</name>
        <dbReference type="ChEBI" id="CHEBI:29108"/>
    </ligand>
</feature>
<feature type="binding site" evidence="5">
    <location>
        <position position="683"/>
    </location>
    <ligand>
        <name>Ca(2+)</name>
        <dbReference type="ChEBI" id="CHEBI:29108"/>
    </ligand>
</feature>
<feature type="modified residue" description="Phosphotyrosine" evidence="3">
    <location>
        <position position="601"/>
    </location>
</feature>
<gene>
    <name type="primary">GPD2</name>
</gene>
<organism>
    <name type="scientific">Bos taurus</name>
    <name type="common">Bovine</name>
    <dbReference type="NCBI Taxonomy" id="9913"/>
    <lineage>
        <taxon>Eukaryota</taxon>
        <taxon>Metazoa</taxon>
        <taxon>Chordata</taxon>
        <taxon>Craniata</taxon>
        <taxon>Vertebrata</taxon>
        <taxon>Euteleostomi</taxon>
        <taxon>Mammalia</taxon>
        <taxon>Eutheria</taxon>
        <taxon>Laurasiatheria</taxon>
        <taxon>Artiodactyla</taxon>
        <taxon>Ruminantia</taxon>
        <taxon>Pecora</taxon>
        <taxon>Bovidae</taxon>
        <taxon>Bovinae</taxon>
        <taxon>Bos</taxon>
    </lineage>
</organism>
<evidence type="ECO:0000250" key="1"/>
<evidence type="ECO:0000250" key="2">
    <source>
        <dbReference type="UniProtKB" id="P43304"/>
    </source>
</evidence>
<evidence type="ECO:0000250" key="3">
    <source>
        <dbReference type="UniProtKB" id="Q64521"/>
    </source>
</evidence>
<evidence type="ECO:0000255" key="4"/>
<evidence type="ECO:0000255" key="5">
    <source>
        <dbReference type="PROSITE-ProRule" id="PRU00448"/>
    </source>
</evidence>
<evidence type="ECO:0000305" key="6"/>
<dbReference type="EC" id="1.1.5.3" evidence="2"/>
<dbReference type="EMBL" id="BC148085">
    <property type="protein sequence ID" value="AAI48086.1"/>
    <property type="molecule type" value="mRNA"/>
</dbReference>
<dbReference type="RefSeq" id="NP_001093766.1">
    <property type="nucleotide sequence ID" value="NM_001100296.1"/>
</dbReference>
<dbReference type="RefSeq" id="XP_005202471.1">
    <property type="nucleotide sequence ID" value="XM_005202414.5"/>
</dbReference>
<dbReference type="RefSeq" id="XP_024855441.1">
    <property type="nucleotide sequence ID" value="XM_024999673.2"/>
</dbReference>
<dbReference type="RefSeq" id="XP_059748128.1">
    <property type="nucleotide sequence ID" value="XM_059892145.1"/>
</dbReference>
<dbReference type="RefSeq" id="XP_059748134.1">
    <property type="nucleotide sequence ID" value="XM_059892151.1"/>
</dbReference>
<dbReference type="RefSeq" id="XP_059748137.1">
    <property type="nucleotide sequence ID" value="XM_059892154.1"/>
</dbReference>
<dbReference type="SMR" id="A6QLU1"/>
<dbReference type="FunCoup" id="A6QLU1">
    <property type="interactions" value="1750"/>
</dbReference>
<dbReference type="STRING" id="9913.ENSBTAP00000064800"/>
<dbReference type="PaxDb" id="9913-ENSBTAP00000012886"/>
<dbReference type="Ensembl" id="ENSBTAT00000012886.6">
    <property type="protein sequence ID" value="ENSBTAP00000012886.5"/>
    <property type="gene ID" value="ENSBTAG00000009770.7"/>
</dbReference>
<dbReference type="GeneID" id="504948"/>
<dbReference type="KEGG" id="bta:504948"/>
<dbReference type="CTD" id="2820"/>
<dbReference type="VEuPathDB" id="HostDB:ENSBTAG00000009770"/>
<dbReference type="VGNC" id="VGNC:29531">
    <property type="gene designation" value="GPD2"/>
</dbReference>
<dbReference type="eggNOG" id="KOG0042">
    <property type="taxonomic scope" value="Eukaryota"/>
</dbReference>
<dbReference type="GeneTree" id="ENSGT00390000001718"/>
<dbReference type="HOGENOM" id="CLU_015740_3_1_1"/>
<dbReference type="InParanoid" id="A6QLU1"/>
<dbReference type="OMA" id="PHIVKPM"/>
<dbReference type="OrthoDB" id="264015at2759"/>
<dbReference type="TreeFam" id="TF300359"/>
<dbReference type="Reactome" id="R-BTA-1483166">
    <property type="pathway name" value="Synthesis of PA"/>
</dbReference>
<dbReference type="Reactome" id="R-BTA-163560">
    <property type="pathway name" value="Triglyceride catabolism"/>
</dbReference>
<dbReference type="UniPathway" id="UPA00618">
    <property type="reaction ID" value="UER00674"/>
</dbReference>
<dbReference type="Proteomes" id="UP000009136">
    <property type="component" value="Chromosome 2"/>
</dbReference>
<dbReference type="Bgee" id="ENSBTAG00000009770">
    <property type="expression patterns" value="Expressed in conceptus and 109 other cell types or tissues"/>
</dbReference>
<dbReference type="GO" id="GO:0005743">
    <property type="term" value="C:mitochondrial inner membrane"/>
    <property type="evidence" value="ECO:0007669"/>
    <property type="project" value="Ensembl"/>
</dbReference>
<dbReference type="GO" id="GO:0005739">
    <property type="term" value="C:mitochondrion"/>
    <property type="evidence" value="ECO:0000318"/>
    <property type="project" value="GO_Central"/>
</dbReference>
<dbReference type="GO" id="GO:0005509">
    <property type="term" value="F:calcium ion binding"/>
    <property type="evidence" value="ECO:0007669"/>
    <property type="project" value="InterPro"/>
</dbReference>
<dbReference type="GO" id="GO:0004368">
    <property type="term" value="F:glycerol-3-phosphate dehydrogenase (quinone) activity"/>
    <property type="evidence" value="ECO:0000250"/>
    <property type="project" value="UniProtKB"/>
</dbReference>
<dbReference type="GO" id="GO:0043010">
    <property type="term" value="P:camera-type eye development"/>
    <property type="evidence" value="ECO:0007669"/>
    <property type="project" value="Ensembl"/>
</dbReference>
<dbReference type="GO" id="GO:0006094">
    <property type="term" value="P:gluconeogenesis"/>
    <property type="evidence" value="ECO:0007669"/>
    <property type="project" value="Ensembl"/>
</dbReference>
<dbReference type="GO" id="GO:0019563">
    <property type="term" value="P:glycerol catabolic process"/>
    <property type="evidence" value="ECO:0007669"/>
    <property type="project" value="UniProtKB-UniPathway"/>
</dbReference>
<dbReference type="GO" id="GO:0006072">
    <property type="term" value="P:glycerol-3-phosphate metabolic process"/>
    <property type="evidence" value="ECO:0000318"/>
    <property type="project" value="GO_Central"/>
</dbReference>
<dbReference type="GO" id="GO:0006127">
    <property type="term" value="P:glycerol-3-phosphate shuttle"/>
    <property type="evidence" value="ECO:0000318"/>
    <property type="project" value="GO_Central"/>
</dbReference>
<dbReference type="GO" id="GO:0035264">
    <property type="term" value="P:multicellular organism growth"/>
    <property type="evidence" value="ECO:0007669"/>
    <property type="project" value="Ensembl"/>
</dbReference>
<dbReference type="CDD" id="cd00051">
    <property type="entry name" value="EFh"/>
    <property type="match status" value="1"/>
</dbReference>
<dbReference type="FunFam" id="1.10.238.10:FF:000155">
    <property type="entry name" value="Glycerol-3-phosphate dehydrogenase"/>
    <property type="match status" value="1"/>
</dbReference>
<dbReference type="FunFam" id="1.10.8.870:FF:000001">
    <property type="entry name" value="Glycerol-3-phosphate dehydrogenase"/>
    <property type="match status" value="1"/>
</dbReference>
<dbReference type="FunFam" id="3.30.9.10:FF:000037">
    <property type="entry name" value="Glycerol-3-phosphate dehydrogenase"/>
    <property type="match status" value="1"/>
</dbReference>
<dbReference type="Gene3D" id="1.10.8.870">
    <property type="entry name" value="Alpha-glycerophosphate oxidase, cap domain"/>
    <property type="match status" value="1"/>
</dbReference>
<dbReference type="Gene3D" id="3.30.9.10">
    <property type="entry name" value="D-Amino Acid Oxidase, subunit A, domain 2"/>
    <property type="match status" value="1"/>
</dbReference>
<dbReference type="Gene3D" id="1.10.238.10">
    <property type="entry name" value="EF-hand"/>
    <property type="match status" value="1"/>
</dbReference>
<dbReference type="Gene3D" id="3.50.50.60">
    <property type="entry name" value="FAD/NAD(P)-binding domain"/>
    <property type="match status" value="1"/>
</dbReference>
<dbReference type="InterPro" id="IPR031656">
    <property type="entry name" value="DAO_C"/>
</dbReference>
<dbReference type="InterPro" id="IPR038299">
    <property type="entry name" value="DAO_C_sf"/>
</dbReference>
<dbReference type="InterPro" id="IPR011992">
    <property type="entry name" value="EF-hand-dom_pair"/>
</dbReference>
<dbReference type="InterPro" id="IPR018247">
    <property type="entry name" value="EF_Hand_1_Ca_BS"/>
</dbReference>
<dbReference type="InterPro" id="IPR002048">
    <property type="entry name" value="EF_hand_dom"/>
</dbReference>
<dbReference type="InterPro" id="IPR006076">
    <property type="entry name" value="FAD-dep_OxRdtase"/>
</dbReference>
<dbReference type="InterPro" id="IPR036188">
    <property type="entry name" value="FAD/NAD-bd_sf"/>
</dbReference>
<dbReference type="InterPro" id="IPR000447">
    <property type="entry name" value="G3P_DH_FAD-dep"/>
</dbReference>
<dbReference type="PANTHER" id="PTHR11985">
    <property type="entry name" value="GLYCEROL-3-PHOSPHATE DEHYDROGENASE"/>
    <property type="match status" value="1"/>
</dbReference>
<dbReference type="PANTHER" id="PTHR11985:SF15">
    <property type="entry name" value="GLYCEROL-3-PHOSPHATE DEHYDROGENASE, MITOCHONDRIAL"/>
    <property type="match status" value="1"/>
</dbReference>
<dbReference type="Pfam" id="PF01266">
    <property type="entry name" value="DAO"/>
    <property type="match status" value="1"/>
</dbReference>
<dbReference type="Pfam" id="PF16901">
    <property type="entry name" value="DAO_C"/>
    <property type="match status" value="1"/>
</dbReference>
<dbReference type="Pfam" id="PF13499">
    <property type="entry name" value="EF-hand_7"/>
    <property type="match status" value="1"/>
</dbReference>
<dbReference type="PRINTS" id="PR01001">
    <property type="entry name" value="FADG3PDH"/>
</dbReference>
<dbReference type="SMART" id="SM00054">
    <property type="entry name" value="EFh"/>
    <property type="match status" value="2"/>
</dbReference>
<dbReference type="SUPFAM" id="SSF47473">
    <property type="entry name" value="EF-hand"/>
    <property type="match status" value="1"/>
</dbReference>
<dbReference type="SUPFAM" id="SSF54373">
    <property type="entry name" value="FAD-linked reductases, C-terminal domain"/>
    <property type="match status" value="1"/>
</dbReference>
<dbReference type="SUPFAM" id="SSF51905">
    <property type="entry name" value="FAD/NAD(P)-binding domain"/>
    <property type="match status" value="1"/>
</dbReference>
<dbReference type="PROSITE" id="PS00018">
    <property type="entry name" value="EF_HAND_1"/>
    <property type="match status" value="1"/>
</dbReference>
<dbReference type="PROSITE" id="PS50222">
    <property type="entry name" value="EF_HAND_2"/>
    <property type="match status" value="2"/>
</dbReference>
<dbReference type="PROSITE" id="PS00977">
    <property type="entry name" value="FAD_G3PDH_1"/>
    <property type="match status" value="1"/>
</dbReference>
<dbReference type="PROSITE" id="PS00978">
    <property type="entry name" value="FAD_G3PDH_2"/>
    <property type="match status" value="1"/>
</dbReference>
<comment type="function">
    <text evidence="2">Calcium-responsive mitochondrial glycerol-3-phosphate dehydrogenase which seems to be a key component of the pancreatic beta-cell glucose-sensing device.</text>
</comment>
<comment type="catalytic activity">
    <reaction evidence="2">
        <text>a quinone + sn-glycerol 3-phosphate = dihydroxyacetone phosphate + a quinol</text>
        <dbReference type="Rhea" id="RHEA:18977"/>
        <dbReference type="ChEBI" id="CHEBI:24646"/>
        <dbReference type="ChEBI" id="CHEBI:57597"/>
        <dbReference type="ChEBI" id="CHEBI:57642"/>
        <dbReference type="ChEBI" id="CHEBI:132124"/>
        <dbReference type="EC" id="1.1.5.3"/>
    </reaction>
    <physiologicalReaction direction="left-to-right" evidence="2">
        <dbReference type="Rhea" id="RHEA:18978"/>
    </physiologicalReaction>
</comment>
<comment type="cofactor">
    <cofactor evidence="1">
        <name>FAD</name>
        <dbReference type="ChEBI" id="CHEBI:57692"/>
    </cofactor>
</comment>
<comment type="activity regulation">
    <text evidence="2">Calcium-binding enhance the activity of the enzyme.</text>
</comment>
<comment type="pathway">
    <text>Polyol metabolism; glycerol degradation via glycerol kinase pathway; glycerone phosphate from sn-glycerol 3-phosphate (aerobic route): step 1/1.</text>
</comment>
<comment type="subcellular location">
    <subcellularLocation>
        <location evidence="1">Mitochondrion</location>
    </subcellularLocation>
</comment>
<comment type="similarity">
    <text evidence="6">Belongs to the FAD-dependent glycerol-3-phosphate dehydrogenase family.</text>
</comment>
<reference key="1">
    <citation type="submission" date="2007-06" db="EMBL/GenBank/DDBJ databases">
        <authorList>
            <consortium name="NIH - Mammalian Gene Collection (MGC) project"/>
        </authorList>
    </citation>
    <scope>NUCLEOTIDE SEQUENCE [LARGE SCALE MRNA]</scope>
    <source>
        <strain>Hereford</strain>
        <tissue>Hypothalamus</tissue>
    </source>
</reference>
<proteinExistence type="evidence at transcript level"/>
<name>GPDM_BOVIN</name>
<protein>
    <recommendedName>
        <fullName>Glycerol-3-phosphate dehydrogenase, mitochondrial</fullName>
        <shortName>GPD-M</shortName>
        <shortName>GPDH-M</shortName>
        <ecNumber evidence="2">1.1.5.3</ecNumber>
    </recommendedName>
</protein>
<keyword id="KW-0106">Calcium</keyword>
<keyword id="KW-0274">FAD</keyword>
<keyword id="KW-0285">Flavoprotein</keyword>
<keyword id="KW-0479">Metal-binding</keyword>
<keyword id="KW-0496">Mitochondrion</keyword>
<keyword id="KW-0560">Oxidoreductase</keyword>
<keyword id="KW-0597">Phosphoprotein</keyword>
<keyword id="KW-1185">Reference proteome</keyword>
<keyword id="KW-0677">Repeat</keyword>
<keyword id="KW-0809">Transit peptide</keyword>